<sequence length="417" mass="44836">MFPRDVRIESYDPELAKAIAAETQRQEDHVELIASENYTSPAVMEAQGSQLTNKYAEGYPGKRYYGGCEYVDIAEQLAIDRLKQLFGADYANVQPHSGSQANQAVYFALLQPGDTILGMSLAHGGHLTHGAKVNASGKLFNAVQYGVNDQGLIDYDEVERLALEHKPKMVVAGFSAYSQVIDWARFRAIADKVGAYLFVDMAHVAGLVAAGVYPSPLEHAHVVTSTTHKTLRGPRGGIIVAKGAGEDLVKKLQSIVFPGIQGGPLMHVIAGKAVAFKEALEPGFKAYQQQVVKNAQAMANTLIARGYKIVSGGTQNHLMLVDMIGKDVSGKDAEAALGKAHITVNKNSVPNDPRSPFVTSGLRLGTPAVTTRGYVEQDCVDLANWIADVLDAPSDDAVIARVRDAVSAQCRKYPVYG</sequence>
<comment type="function">
    <text evidence="1">Catalyzes the reversible interconversion of serine and glycine with tetrahydrofolate (THF) serving as the one-carbon carrier. This reaction serves as the major source of one-carbon groups required for the biosynthesis of purines, thymidylate, methionine, and other important biomolecules. Also exhibits THF-independent aldolase activity toward beta-hydroxyamino acids, producing glycine and aldehydes, via a retro-aldol mechanism.</text>
</comment>
<comment type="catalytic activity">
    <reaction evidence="1">
        <text>(6R)-5,10-methylene-5,6,7,8-tetrahydrofolate + glycine + H2O = (6S)-5,6,7,8-tetrahydrofolate + L-serine</text>
        <dbReference type="Rhea" id="RHEA:15481"/>
        <dbReference type="ChEBI" id="CHEBI:15377"/>
        <dbReference type="ChEBI" id="CHEBI:15636"/>
        <dbReference type="ChEBI" id="CHEBI:33384"/>
        <dbReference type="ChEBI" id="CHEBI:57305"/>
        <dbReference type="ChEBI" id="CHEBI:57453"/>
        <dbReference type="EC" id="2.1.2.1"/>
    </reaction>
</comment>
<comment type="cofactor">
    <cofactor evidence="1">
        <name>pyridoxal 5'-phosphate</name>
        <dbReference type="ChEBI" id="CHEBI:597326"/>
    </cofactor>
</comment>
<comment type="pathway">
    <text evidence="1">One-carbon metabolism; tetrahydrofolate interconversion.</text>
</comment>
<comment type="pathway">
    <text evidence="1">Amino-acid biosynthesis; glycine biosynthesis; glycine from L-serine: step 1/1.</text>
</comment>
<comment type="subunit">
    <text evidence="1">Homodimer.</text>
</comment>
<comment type="subcellular location">
    <subcellularLocation>
        <location evidence="1">Cytoplasm</location>
    </subcellularLocation>
</comment>
<comment type="similarity">
    <text evidence="1">Belongs to the SHMT family.</text>
</comment>
<protein>
    <recommendedName>
        <fullName evidence="1">Serine hydroxymethyltransferase</fullName>
        <shortName evidence="1">SHMT</shortName>
        <shortName evidence="1">Serine methylase</shortName>
        <ecNumber evidence="1">2.1.2.1</ecNumber>
    </recommendedName>
</protein>
<evidence type="ECO:0000255" key="1">
    <source>
        <dbReference type="HAMAP-Rule" id="MF_00051"/>
    </source>
</evidence>
<dbReference type="EC" id="2.1.2.1" evidence="1"/>
<dbReference type="EMBL" id="CP001111">
    <property type="protein sequence ID" value="ACF50278.1"/>
    <property type="molecule type" value="Genomic_DNA"/>
</dbReference>
<dbReference type="RefSeq" id="WP_004143345.1">
    <property type="nucleotide sequence ID" value="NC_011071.1"/>
</dbReference>
<dbReference type="SMR" id="B4SJB0"/>
<dbReference type="STRING" id="391008.Smal_0573"/>
<dbReference type="KEGG" id="smt:Smal_0573"/>
<dbReference type="eggNOG" id="COG0112">
    <property type="taxonomic scope" value="Bacteria"/>
</dbReference>
<dbReference type="HOGENOM" id="CLU_022477_2_1_6"/>
<dbReference type="OrthoDB" id="9803846at2"/>
<dbReference type="UniPathway" id="UPA00193"/>
<dbReference type="UniPathway" id="UPA00288">
    <property type="reaction ID" value="UER01023"/>
</dbReference>
<dbReference type="Proteomes" id="UP000001867">
    <property type="component" value="Chromosome"/>
</dbReference>
<dbReference type="GO" id="GO:0005829">
    <property type="term" value="C:cytosol"/>
    <property type="evidence" value="ECO:0007669"/>
    <property type="project" value="TreeGrafter"/>
</dbReference>
<dbReference type="GO" id="GO:0004372">
    <property type="term" value="F:glycine hydroxymethyltransferase activity"/>
    <property type="evidence" value="ECO:0007669"/>
    <property type="project" value="UniProtKB-UniRule"/>
</dbReference>
<dbReference type="GO" id="GO:0030170">
    <property type="term" value="F:pyridoxal phosphate binding"/>
    <property type="evidence" value="ECO:0007669"/>
    <property type="project" value="UniProtKB-UniRule"/>
</dbReference>
<dbReference type="GO" id="GO:0019264">
    <property type="term" value="P:glycine biosynthetic process from serine"/>
    <property type="evidence" value="ECO:0007669"/>
    <property type="project" value="UniProtKB-UniRule"/>
</dbReference>
<dbReference type="GO" id="GO:0035999">
    <property type="term" value="P:tetrahydrofolate interconversion"/>
    <property type="evidence" value="ECO:0007669"/>
    <property type="project" value="UniProtKB-UniRule"/>
</dbReference>
<dbReference type="CDD" id="cd00378">
    <property type="entry name" value="SHMT"/>
    <property type="match status" value="1"/>
</dbReference>
<dbReference type="FunFam" id="3.40.640.10:FF:000001">
    <property type="entry name" value="Serine hydroxymethyltransferase"/>
    <property type="match status" value="1"/>
</dbReference>
<dbReference type="FunFam" id="3.90.1150.10:FF:000003">
    <property type="entry name" value="Serine hydroxymethyltransferase"/>
    <property type="match status" value="1"/>
</dbReference>
<dbReference type="Gene3D" id="3.90.1150.10">
    <property type="entry name" value="Aspartate Aminotransferase, domain 1"/>
    <property type="match status" value="1"/>
</dbReference>
<dbReference type="Gene3D" id="3.40.640.10">
    <property type="entry name" value="Type I PLP-dependent aspartate aminotransferase-like (Major domain)"/>
    <property type="match status" value="1"/>
</dbReference>
<dbReference type="HAMAP" id="MF_00051">
    <property type="entry name" value="SHMT"/>
    <property type="match status" value="1"/>
</dbReference>
<dbReference type="InterPro" id="IPR015424">
    <property type="entry name" value="PyrdxlP-dep_Trfase"/>
</dbReference>
<dbReference type="InterPro" id="IPR015421">
    <property type="entry name" value="PyrdxlP-dep_Trfase_major"/>
</dbReference>
<dbReference type="InterPro" id="IPR015422">
    <property type="entry name" value="PyrdxlP-dep_Trfase_small"/>
</dbReference>
<dbReference type="InterPro" id="IPR001085">
    <property type="entry name" value="Ser_HO-MeTrfase"/>
</dbReference>
<dbReference type="InterPro" id="IPR049943">
    <property type="entry name" value="Ser_HO-MeTrfase-like"/>
</dbReference>
<dbReference type="InterPro" id="IPR019798">
    <property type="entry name" value="Ser_HO-MeTrfase_PLP_BS"/>
</dbReference>
<dbReference type="InterPro" id="IPR039429">
    <property type="entry name" value="SHMT-like_dom"/>
</dbReference>
<dbReference type="NCBIfam" id="NF000586">
    <property type="entry name" value="PRK00011.1"/>
    <property type="match status" value="1"/>
</dbReference>
<dbReference type="PANTHER" id="PTHR11680">
    <property type="entry name" value="SERINE HYDROXYMETHYLTRANSFERASE"/>
    <property type="match status" value="1"/>
</dbReference>
<dbReference type="PANTHER" id="PTHR11680:SF50">
    <property type="entry name" value="SERINE HYDROXYMETHYLTRANSFERASE"/>
    <property type="match status" value="1"/>
</dbReference>
<dbReference type="Pfam" id="PF00464">
    <property type="entry name" value="SHMT"/>
    <property type="match status" value="1"/>
</dbReference>
<dbReference type="PIRSF" id="PIRSF000412">
    <property type="entry name" value="SHMT"/>
    <property type="match status" value="1"/>
</dbReference>
<dbReference type="SUPFAM" id="SSF53383">
    <property type="entry name" value="PLP-dependent transferases"/>
    <property type="match status" value="1"/>
</dbReference>
<dbReference type="PROSITE" id="PS00096">
    <property type="entry name" value="SHMT"/>
    <property type="match status" value="1"/>
</dbReference>
<gene>
    <name evidence="1" type="primary">glyA</name>
    <name type="ordered locus">Smal_0573</name>
</gene>
<organism>
    <name type="scientific">Stenotrophomonas maltophilia (strain R551-3)</name>
    <dbReference type="NCBI Taxonomy" id="391008"/>
    <lineage>
        <taxon>Bacteria</taxon>
        <taxon>Pseudomonadati</taxon>
        <taxon>Pseudomonadota</taxon>
        <taxon>Gammaproteobacteria</taxon>
        <taxon>Lysobacterales</taxon>
        <taxon>Lysobacteraceae</taxon>
        <taxon>Stenotrophomonas</taxon>
        <taxon>Stenotrophomonas maltophilia group</taxon>
    </lineage>
</organism>
<feature type="chain" id="PRO_1000091583" description="Serine hydroxymethyltransferase">
    <location>
        <begin position="1"/>
        <end position="417"/>
    </location>
</feature>
<feature type="binding site" evidence="1">
    <location>
        <position position="121"/>
    </location>
    <ligand>
        <name>(6S)-5,6,7,8-tetrahydrofolate</name>
        <dbReference type="ChEBI" id="CHEBI:57453"/>
    </ligand>
</feature>
<feature type="binding site" evidence="1">
    <location>
        <begin position="125"/>
        <end position="127"/>
    </location>
    <ligand>
        <name>(6S)-5,6,7,8-tetrahydrofolate</name>
        <dbReference type="ChEBI" id="CHEBI:57453"/>
    </ligand>
</feature>
<feature type="binding site" evidence="1">
    <location>
        <begin position="355"/>
        <end position="357"/>
    </location>
    <ligand>
        <name>(6S)-5,6,7,8-tetrahydrofolate</name>
        <dbReference type="ChEBI" id="CHEBI:57453"/>
    </ligand>
</feature>
<feature type="site" description="Plays an important role in substrate specificity" evidence="1">
    <location>
        <position position="228"/>
    </location>
</feature>
<feature type="modified residue" description="N6-(pyridoxal phosphate)lysine" evidence="1">
    <location>
        <position position="229"/>
    </location>
</feature>
<reference key="1">
    <citation type="submission" date="2008-06" db="EMBL/GenBank/DDBJ databases">
        <title>Complete sequence of Stenotrophomonas maltophilia R551-3.</title>
        <authorList>
            <consortium name="US DOE Joint Genome Institute"/>
            <person name="Lucas S."/>
            <person name="Copeland A."/>
            <person name="Lapidus A."/>
            <person name="Glavina del Rio T."/>
            <person name="Dalin E."/>
            <person name="Tice H."/>
            <person name="Pitluck S."/>
            <person name="Chain P."/>
            <person name="Malfatti S."/>
            <person name="Shin M."/>
            <person name="Vergez L."/>
            <person name="Lang D."/>
            <person name="Schmutz J."/>
            <person name="Larimer F."/>
            <person name="Land M."/>
            <person name="Hauser L."/>
            <person name="Kyrpides N."/>
            <person name="Mikhailova N."/>
            <person name="Taghavi S."/>
            <person name="Monchy S."/>
            <person name="Newman L."/>
            <person name="Vangronsveld J."/>
            <person name="van der Lelie D."/>
            <person name="Richardson P."/>
        </authorList>
    </citation>
    <scope>NUCLEOTIDE SEQUENCE [LARGE SCALE GENOMIC DNA]</scope>
    <source>
        <strain>R551-3</strain>
    </source>
</reference>
<keyword id="KW-0028">Amino-acid biosynthesis</keyword>
<keyword id="KW-0963">Cytoplasm</keyword>
<keyword id="KW-0554">One-carbon metabolism</keyword>
<keyword id="KW-0663">Pyridoxal phosphate</keyword>
<keyword id="KW-0808">Transferase</keyword>
<accession>B4SJB0</accession>
<name>GLYA_STRM5</name>
<proteinExistence type="inferred from homology"/>